<feature type="chain" id="PRO_0000081671" description="Nucleolar protein 12">
    <location>
        <begin position="1"/>
        <end position="462"/>
    </location>
</feature>
<feature type="domain" description="RRM" evidence="2">
    <location>
        <begin position="297"/>
        <end position="378"/>
    </location>
</feature>
<feature type="region of interest" description="Disordered" evidence="3">
    <location>
        <begin position="24"/>
        <end position="148"/>
    </location>
</feature>
<feature type="region of interest" description="Disordered" evidence="3">
    <location>
        <begin position="191"/>
        <end position="215"/>
    </location>
</feature>
<feature type="region of interest" description="Disordered" evidence="3">
    <location>
        <begin position="381"/>
        <end position="400"/>
    </location>
</feature>
<feature type="region of interest" description="Disordered" evidence="3">
    <location>
        <begin position="432"/>
        <end position="462"/>
    </location>
</feature>
<feature type="compositionally biased region" description="Acidic residues" evidence="3">
    <location>
        <begin position="47"/>
        <end position="59"/>
    </location>
</feature>
<feature type="compositionally biased region" description="Basic and acidic residues" evidence="3">
    <location>
        <begin position="108"/>
        <end position="124"/>
    </location>
</feature>
<feature type="compositionally biased region" description="Acidic residues" evidence="3">
    <location>
        <begin position="125"/>
        <end position="134"/>
    </location>
</feature>
<feature type="compositionally biased region" description="Polar residues" evidence="3">
    <location>
        <begin position="137"/>
        <end position="146"/>
    </location>
</feature>
<feature type="compositionally biased region" description="Acidic residues" evidence="3">
    <location>
        <begin position="198"/>
        <end position="211"/>
    </location>
</feature>
<feature type="compositionally biased region" description="Polar residues" evidence="3">
    <location>
        <begin position="383"/>
        <end position="397"/>
    </location>
</feature>
<feature type="compositionally biased region" description="Basic residues" evidence="3">
    <location>
        <begin position="438"/>
        <end position="455"/>
    </location>
</feature>
<organism>
    <name type="scientific">Kluyveromyces lactis (strain ATCC 8585 / CBS 2359 / DSM 70799 / NBRC 1267 / NRRL Y-1140 / WM37)</name>
    <name type="common">Yeast</name>
    <name type="synonym">Candida sphaerica</name>
    <dbReference type="NCBI Taxonomy" id="284590"/>
    <lineage>
        <taxon>Eukaryota</taxon>
        <taxon>Fungi</taxon>
        <taxon>Dikarya</taxon>
        <taxon>Ascomycota</taxon>
        <taxon>Saccharomycotina</taxon>
        <taxon>Saccharomycetes</taxon>
        <taxon>Saccharomycetales</taxon>
        <taxon>Saccharomycetaceae</taxon>
        <taxon>Kluyveromyces</taxon>
    </lineage>
</organism>
<evidence type="ECO:0000250" key="1"/>
<evidence type="ECO:0000255" key="2">
    <source>
        <dbReference type="PROSITE-ProRule" id="PRU00176"/>
    </source>
</evidence>
<evidence type="ECO:0000256" key="3">
    <source>
        <dbReference type="SAM" id="MobiDB-lite"/>
    </source>
</evidence>
<evidence type="ECO:0000305" key="4"/>
<sequence>MSALNNLFGNSKSDAAGTSSIAALFSKPNHVDERKVKSKARTVLTEPEQDKDEQEEENVQESASTVSEGVEKEQEEQEEQPKKKKKKTKKNDEENDNLEVQYYSKVLGDSKSKDEPKDEPKDDSSDSDNEDEATAVDKSSITGTESESAKVINLKEKELAKAERTIFIGNVPNEVITSKKVYKEFKKLLSKDPRSENDDHDDGEEDEEEEESKTKDVKFNVESIRFRSIAFEEALPRKVAFVHQKLHKSRDSINAYAVYGSSNPVKIMCQYLNGKVFNDHHLRVDSVTHPSPHDKRRSVFVGNLDFEEVEESLWKHFEPCGDIEYVRIIRDSKTNMGKGFAYVQFKDFQSVSKALLLHEKKIHEGKKARKLRISRCKNMRKAQGNQSSLQNNKLNDQQRTKLGRAKKVLGKADRAKLGEELTIEGLRASKGETTPVLKRTKNRSKTGRVTKRSIAFKKQNAQ</sequence>
<proteinExistence type="inferred from homology"/>
<name>NOP12_KLULA</name>
<accession>Q6CKV6</accession>
<comment type="function">
    <text evidence="1">Involved in pre-25S rRNA processing.</text>
</comment>
<comment type="subcellular location">
    <subcellularLocation>
        <location evidence="1">Nucleus</location>
        <location evidence="1">Nucleolus</location>
    </subcellularLocation>
</comment>
<comment type="similarity">
    <text evidence="4">Belongs to the RRM RBM34 family.</text>
</comment>
<dbReference type="EMBL" id="CR382126">
    <property type="protein sequence ID" value="CAG98141.2"/>
    <property type="molecule type" value="Genomic_DNA"/>
</dbReference>
<dbReference type="RefSeq" id="XP_455433.2">
    <property type="nucleotide sequence ID" value="XM_455433.2"/>
</dbReference>
<dbReference type="SMR" id="Q6CKV6"/>
<dbReference type="FunCoup" id="Q6CKV6">
    <property type="interactions" value="923"/>
</dbReference>
<dbReference type="STRING" id="284590.Q6CKV6"/>
<dbReference type="PaxDb" id="284590-Q6CKV6"/>
<dbReference type="KEGG" id="kla:KLLA0_F07799g"/>
<dbReference type="eggNOG" id="KOG0118">
    <property type="taxonomic scope" value="Eukaryota"/>
</dbReference>
<dbReference type="HOGENOM" id="CLU_006468_0_0_1"/>
<dbReference type="InParanoid" id="Q6CKV6"/>
<dbReference type="Proteomes" id="UP000000598">
    <property type="component" value="Chromosome F"/>
</dbReference>
<dbReference type="GO" id="GO:0005730">
    <property type="term" value="C:nucleolus"/>
    <property type="evidence" value="ECO:0007669"/>
    <property type="project" value="UniProtKB-SubCell"/>
</dbReference>
<dbReference type="GO" id="GO:0019843">
    <property type="term" value="F:rRNA binding"/>
    <property type="evidence" value="ECO:0007669"/>
    <property type="project" value="TreeGrafter"/>
</dbReference>
<dbReference type="GO" id="GO:0000463">
    <property type="term" value="P:maturation of LSU-rRNA from tricistronic rRNA transcript (SSU-rRNA, 5.8S rRNA, LSU-rRNA)"/>
    <property type="evidence" value="ECO:0007669"/>
    <property type="project" value="TreeGrafter"/>
</dbReference>
<dbReference type="CDD" id="cd12670">
    <property type="entry name" value="RRM2_Nop12p_like"/>
    <property type="match status" value="1"/>
</dbReference>
<dbReference type="FunFam" id="3.30.70.330:FF:000925">
    <property type="entry name" value="Nucleolar protein 12"/>
    <property type="match status" value="1"/>
</dbReference>
<dbReference type="Gene3D" id="3.30.70.330">
    <property type="match status" value="2"/>
</dbReference>
<dbReference type="InterPro" id="IPR012677">
    <property type="entry name" value="Nucleotide-bd_a/b_plait_sf"/>
</dbReference>
<dbReference type="InterPro" id="IPR035979">
    <property type="entry name" value="RBD_domain_sf"/>
</dbReference>
<dbReference type="InterPro" id="IPR047189">
    <property type="entry name" value="RRM2_Nop12p-like"/>
</dbReference>
<dbReference type="InterPro" id="IPR000504">
    <property type="entry name" value="RRM_dom"/>
</dbReference>
<dbReference type="PANTHER" id="PTHR23236">
    <property type="entry name" value="EUKARYOTIC TRANSLATION INITIATION FACTOR 4B/4H"/>
    <property type="match status" value="1"/>
</dbReference>
<dbReference type="PANTHER" id="PTHR23236:SF25">
    <property type="entry name" value="RNA-BINDING PROTEIN 34"/>
    <property type="match status" value="1"/>
</dbReference>
<dbReference type="Pfam" id="PF00076">
    <property type="entry name" value="RRM_1"/>
    <property type="match status" value="1"/>
</dbReference>
<dbReference type="SMART" id="SM00360">
    <property type="entry name" value="RRM"/>
    <property type="match status" value="1"/>
</dbReference>
<dbReference type="SUPFAM" id="SSF54928">
    <property type="entry name" value="RNA-binding domain, RBD"/>
    <property type="match status" value="1"/>
</dbReference>
<dbReference type="PROSITE" id="PS50102">
    <property type="entry name" value="RRM"/>
    <property type="match status" value="1"/>
</dbReference>
<gene>
    <name type="primary">NOP12</name>
    <name type="ordered locus">KLLA0F07799g</name>
</gene>
<reference key="1">
    <citation type="journal article" date="2004" name="Nature">
        <title>Genome evolution in yeasts.</title>
        <authorList>
            <person name="Dujon B."/>
            <person name="Sherman D."/>
            <person name="Fischer G."/>
            <person name="Durrens P."/>
            <person name="Casaregola S."/>
            <person name="Lafontaine I."/>
            <person name="de Montigny J."/>
            <person name="Marck C."/>
            <person name="Neuveglise C."/>
            <person name="Talla E."/>
            <person name="Goffard N."/>
            <person name="Frangeul L."/>
            <person name="Aigle M."/>
            <person name="Anthouard V."/>
            <person name="Babour A."/>
            <person name="Barbe V."/>
            <person name="Barnay S."/>
            <person name="Blanchin S."/>
            <person name="Beckerich J.-M."/>
            <person name="Beyne E."/>
            <person name="Bleykasten C."/>
            <person name="Boisrame A."/>
            <person name="Boyer J."/>
            <person name="Cattolico L."/>
            <person name="Confanioleri F."/>
            <person name="de Daruvar A."/>
            <person name="Despons L."/>
            <person name="Fabre E."/>
            <person name="Fairhead C."/>
            <person name="Ferry-Dumazet H."/>
            <person name="Groppi A."/>
            <person name="Hantraye F."/>
            <person name="Hennequin C."/>
            <person name="Jauniaux N."/>
            <person name="Joyet P."/>
            <person name="Kachouri R."/>
            <person name="Kerrest A."/>
            <person name="Koszul R."/>
            <person name="Lemaire M."/>
            <person name="Lesur I."/>
            <person name="Ma L."/>
            <person name="Muller H."/>
            <person name="Nicaud J.-M."/>
            <person name="Nikolski M."/>
            <person name="Oztas S."/>
            <person name="Ozier-Kalogeropoulos O."/>
            <person name="Pellenz S."/>
            <person name="Potier S."/>
            <person name="Richard G.-F."/>
            <person name="Straub M.-L."/>
            <person name="Suleau A."/>
            <person name="Swennen D."/>
            <person name="Tekaia F."/>
            <person name="Wesolowski-Louvel M."/>
            <person name="Westhof E."/>
            <person name="Wirth B."/>
            <person name="Zeniou-Meyer M."/>
            <person name="Zivanovic Y."/>
            <person name="Bolotin-Fukuhara M."/>
            <person name="Thierry A."/>
            <person name="Bouchier C."/>
            <person name="Caudron B."/>
            <person name="Scarpelli C."/>
            <person name="Gaillardin C."/>
            <person name="Weissenbach J."/>
            <person name="Wincker P."/>
            <person name="Souciet J.-L."/>
        </authorList>
    </citation>
    <scope>NUCLEOTIDE SEQUENCE [LARGE SCALE GENOMIC DNA]</scope>
    <source>
        <strain>ATCC 8585 / CBS 2359 / DSM 70799 / NBRC 1267 / NRRL Y-1140 / WM37</strain>
    </source>
</reference>
<protein>
    <recommendedName>
        <fullName>Nucleolar protein 12</fullName>
    </recommendedName>
</protein>
<keyword id="KW-0539">Nucleus</keyword>
<keyword id="KW-1185">Reference proteome</keyword>
<keyword id="KW-0690">Ribosome biogenesis</keyword>
<keyword id="KW-0694">RNA-binding</keyword>
<keyword id="KW-0698">rRNA processing</keyword>